<proteinExistence type="inferred from homology"/>
<sequence length="380" mass="44405">MSCPYAGNGNEHDDSAVPLSNEIGKIYGEYLMLDKVLDAQCMLSKEDKRPVHDEHLFIITHQAYELWFKQIIFEFDSIRDMLNAEVIDETKTLEIVKRLNRVVLILKLLVDQVPILETMTPLDFMDFRKYLAPASGFQSMQFRLIENKLGVLTEQRVKYNQKYSDVFGNDAQALNAIRNSEIEPSLLELVQRWLERTPGLEEDGFNFWQKFQQSVDQFLDAQVQSAMEEPVEQAKNYRLMDIEKRREVYRSIFDTAVHEALVKRGDRRFSHRALQGAIMITFYRDEPRFSQPHQLLTLLMDIDSLITKWRYNHVIMVQRMIGSQQLGTGGSSGYQYLRSTLSDRYKVFLDLFNLSTFLIPREAIPPLDESIRKKLINKSV</sequence>
<keyword id="KW-0223">Dioxygenase</keyword>
<keyword id="KW-0349">Heme</keyword>
<keyword id="KW-0408">Iron</keyword>
<keyword id="KW-0479">Metal-binding</keyword>
<keyword id="KW-0560">Oxidoreductase</keyword>
<keyword id="KW-1185">Reference proteome</keyword>
<keyword id="KW-0823">Tryptophan catabolism</keyword>
<accession>B4MSH7</accession>
<protein>
    <recommendedName>
        <fullName evidence="1">Tryptophan 2,3-dioxygenase</fullName>
        <shortName evidence="1">TDO</shortName>
        <ecNumber evidence="1">1.13.11.11</ecNumber>
    </recommendedName>
    <alternativeName>
        <fullName evidence="1">Protein vermilion</fullName>
    </alternativeName>
    <alternativeName>
        <fullName evidence="1">Tryptamin 2,3-dioxygenase</fullName>
    </alternativeName>
    <alternativeName>
        <fullName evidence="1">Tryptophan oxygenase</fullName>
        <shortName evidence="1">TO</shortName>
        <shortName evidence="1">TRPO</shortName>
    </alternativeName>
    <alternativeName>
        <fullName evidence="1">Tryptophan pyrrolase</fullName>
    </alternativeName>
    <alternativeName>
        <fullName evidence="1">Tryptophanase</fullName>
    </alternativeName>
</protein>
<reference key="1">
    <citation type="journal article" date="2007" name="Nature">
        <title>Evolution of genes and genomes on the Drosophila phylogeny.</title>
        <authorList>
            <consortium name="Drosophila 12 genomes consortium"/>
        </authorList>
    </citation>
    <scope>NUCLEOTIDE SEQUENCE [LARGE SCALE GENOMIC DNA]</scope>
    <source>
        <strain>Tucson 14030-0811.24</strain>
    </source>
</reference>
<gene>
    <name evidence="1" type="primary">v</name>
    <name type="ORF">GK19977</name>
</gene>
<feature type="chain" id="PRO_0000360883" description="Tryptophan 2,3-dioxygenase">
    <location>
        <begin position="1"/>
        <end position="380"/>
    </location>
</feature>
<feature type="binding site" evidence="1">
    <location>
        <begin position="57"/>
        <end position="61"/>
    </location>
    <ligand>
        <name>substrate</name>
    </ligand>
</feature>
<feature type="binding site" evidence="1">
    <location>
        <position position="128"/>
    </location>
    <ligand>
        <name>substrate</name>
    </ligand>
</feature>
<feature type="binding site" description="axial binding residue" evidence="1">
    <location>
        <position position="313"/>
    </location>
    <ligand>
        <name>heme</name>
        <dbReference type="ChEBI" id="CHEBI:30413"/>
    </ligand>
    <ligandPart>
        <name>Fe</name>
        <dbReference type="ChEBI" id="CHEBI:18248"/>
    </ligandPart>
</feature>
<feature type="binding site" evidence="1">
    <location>
        <position position="328"/>
    </location>
    <ligand>
        <name>substrate</name>
    </ligand>
</feature>
<comment type="function">
    <text evidence="1">Heme-dependent dioxygenase that catalyzes the oxidative cleavage of the L-tryptophan (L-Trp) pyrrole ring and converts L-tryptophan to N-formyl-L-kynurenine. Catalyzes the oxidative cleavage of the indole moiety.</text>
</comment>
<comment type="catalytic activity">
    <reaction evidence="1">
        <text>L-tryptophan + O2 = N-formyl-L-kynurenine</text>
        <dbReference type="Rhea" id="RHEA:24536"/>
        <dbReference type="ChEBI" id="CHEBI:15379"/>
        <dbReference type="ChEBI" id="CHEBI:57912"/>
        <dbReference type="ChEBI" id="CHEBI:58629"/>
        <dbReference type="EC" id="1.13.11.11"/>
    </reaction>
</comment>
<comment type="cofactor">
    <cofactor evidence="1">
        <name>heme</name>
        <dbReference type="ChEBI" id="CHEBI:30413"/>
    </cofactor>
    <text evidence="1">Binds 1 heme group per subunit.</text>
</comment>
<comment type="pathway">
    <text evidence="1">Amino-acid degradation; L-tryptophan degradation via kynurenine pathway; L-kynurenine from L-tryptophan: step 1/2.</text>
</comment>
<comment type="pathway">
    <text evidence="1">Pigment biosynthesis; ommochrome biosynthesis.</text>
</comment>
<comment type="subunit">
    <text evidence="1">Homotetramer. Dimer of dimers.</text>
</comment>
<comment type="similarity">
    <text evidence="1">Belongs to the tryptophan 2,3-dioxygenase family.</text>
</comment>
<evidence type="ECO:0000255" key="1">
    <source>
        <dbReference type="HAMAP-Rule" id="MF_03020"/>
    </source>
</evidence>
<organism>
    <name type="scientific">Drosophila willistoni</name>
    <name type="common">Fruit fly</name>
    <dbReference type="NCBI Taxonomy" id="7260"/>
    <lineage>
        <taxon>Eukaryota</taxon>
        <taxon>Metazoa</taxon>
        <taxon>Ecdysozoa</taxon>
        <taxon>Arthropoda</taxon>
        <taxon>Hexapoda</taxon>
        <taxon>Insecta</taxon>
        <taxon>Pterygota</taxon>
        <taxon>Neoptera</taxon>
        <taxon>Endopterygota</taxon>
        <taxon>Diptera</taxon>
        <taxon>Brachycera</taxon>
        <taxon>Muscomorpha</taxon>
        <taxon>Ephydroidea</taxon>
        <taxon>Drosophilidae</taxon>
        <taxon>Drosophila</taxon>
        <taxon>Sophophora</taxon>
    </lineage>
</organism>
<name>T23O_DROWI</name>
<dbReference type="EC" id="1.13.11.11" evidence="1"/>
<dbReference type="EMBL" id="CH963851">
    <property type="protein sequence ID" value="EDW75066.1"/>
    <property type="molecule type" value="Genomic_DNA"/>
</dbReference>
<dbReference type="SMR" id="B4MSH7"/>
<dbReference type="STRING" id="7260.B4MSH7"/>
<dbReference type="EnsemblMetazoa" id="FBtr0250628">
    <property type="protein sequence ID" value="FBpp0249120"/>
    <property type="gene ID" value="FBgn0221974"/>
</dbReference>
<dbReference type="EnsemblMetazoa" id="XM_002064044.4">
    <property type="protein sequence ID" value="XP_002064080.1"/>
    <property type="gene ID" value="LOC6641329"/>
</dbReference>
<dbReference type="GeneID" id="6641329"/>
<dbReference type="KEGG" id="dwi:6641329"/>
<dbReference type="CTD" id="136040130"/>
<dbReference type="eggNOG" id="KOG3906">
    <property type="taxonomic scope" value="Eukaryota"/>
</dbReference>
<dbReference type="HOGENOM" id="CLU_045599_1_1_1"/>
<dbReference type="OMA" id="WRWRNDH"/>
<dbReference type="OrthoDB" id="447477at2759"/>
<dbReference type="PhylomeDB" id="B4MSH7"/>
<dbReference type="UniPathway" id="UPA00271"/>
<dbReference type="UniPathway" id="UPA00333">
    <property type="reaction ID" value="UER00453"/>
</dbReference>
<dbReference type="Proteomes" id="UP000007798">
    <property type="component" value="Unassembled WGS sequence"/>
</dbReference>
<dbReference type="GO" id="GO:0020037">
    <property type="term" value="F:heme binding"/>
    <property type="evidence" value="ECO:0000250"/>
    <property type="project" value="UniProtKB"/>
</dbReference>
<dbReference type="GO" id="GO:0046872">
    <property type="term" value="F:metal ion binding"/>
    <property type="evidence" value="ECO:0007669"/>
    <property type="project" value="UniProtKB-KW"/>
</dbReference>
<dbReference type="GO" id="GO:0004833">
    <property type="term" value="F:tryptophan 2,3-dioxygenase activity"/>
    <property type="evidence" value="ECO:0000250"/>
    <property type="project" value="UniProtKB"/>
</dbReference>
<dbReference type="GO" id="GO:0019442">
    <property type="term" value="P:L-tryptophan catabolic process to acetyl-CoA"/>
    <property type="evidence" value="ECO:0007669"/>
    <property type="project" value="TreeGrafter"/>
</dbReference>
<dbReference type="GO" id="GO:0019441">
    <property type="term" value="P:L-tryptophan catabolic process to kynurenine"/>
    <property type="evidence" value="ECO:0000250"/>
    <property type="project" value="UniProtKB"/>
</dbReference>
<dbReference type="GO" id="GO:0006727">
    <property type="term" value="P:ommochrome biosynthetic process"/>
    <property type="evidence" value="ECO:0007669"/>
    <property type="project" value="UniProtKB-UniRule"/>
</dbReference>
<dbReference type="GO" id="GO:0051289">
    <property type="term" value="P:protein homotetramerization"/>
    <property type="evidence" value="ECO:0007669"/>
    <property type="project" value="EnsemblMetazoa"/>
</dbReference>
<dbReference type="FunFam" id="1.10.287.3810:FF:000001">
    <property type="entry name" value="Tryptophan 2,3-dioxygenase"/>
    <property type="match status" value="1"/>
</dbReference>
<dbReference type="Gene3D" id="1.10.287.3810">
    <property type="match status" value="1"/>
</dbReference>
<dbReference type="Gene3D" id="1.20.58.480">
    <property type="match status" value="1"/>
</dbReference>
<dbReference type="HAMAP" id="MF_01972">
    <property type="entry name" value="T23O"/>
    <property type="match status" value="1"/>
</dbReference>
<dbReference type="InterPro" id="IPR037217">
    <property type="entry name" value="Trp/Indoleamine_2_3_dOase-like"/>
</dbReference>
<dbReference type="InterPro" id="IPR004981">
    <property type="entry name" value="Trp_2_3_dOase"/>
</dbReference>
<dbReference type="PANTHER" id="PTHR10138">
    <property type="entry name" value="TRYPTOPHAN 2,3-DIOXYGENASE"/>
    <property type="match status" value="1"/>
</dbReference>
<dbReference type="PANTHER" id="PTHR10138:SF0">
    <property type="entry name" value="TRYPTOPHAN 2,3-DIOXYGENASE"/>
    <property type="match status" value="1"/>
</dbReference>
<dbReference type="Pfam" id="PF03301">
    <property type="entry name" value="Trp_dioxygenase"/>
    <property type="match status" value="1"/>
</dbReference>
<dbReference type="SUPFAM" id="SSF140959">
    <property type="entry name" value="Indolic compounds 2,3-dioxygenase-like"/>
    <property type="match status" value="1"/>
</dbReference>